<proteinExistence type="evidence at protein level"/>
<protein>
    <recommendedName>
        <fullName>Vinexin</fullName>
    </recommendedName>
    <alternativeName>
        <fullName>SH3 domain-containing protein SH3P3</fullName>
    </alternativeName>
    <alternativeName>
        <fullName>SH3-containing adapter molecule 1</fullName>
        <shortName>SCAM-1</shortName>
    </alternativeName>
    <alternativeName>
        <fullName>Sorbin and SH3 domain-containing protein 3</fullName>
    </alternativeName>
</protein>
<comment type="function">
    <text>Promotes up-regulation of actin stress fiber formation.</text>
</comment>
<comment type="subunit">
    <text evidence="1">Interacts with vinculin by the first two SH3 domains and the proline rich region of vinculin. Binds to SOS (guanine nucleotide exchange factor of RAS and RAC), through its third SH3 domain. The formation of this complex is down-regulated by phosphorylation of SOS. Interacts with SAFB2, INPPL1/SHIP2 and SRCIN1 (By similarity). Interacts with DLG5 through its third SH3 domain. Interacts with SOCS7 and MAPK1/ERK2. Interacts with FASLG (By similarity).</text>
</comment>
<comment type="subcellular location">
    <subcellularLocation>
        <location>Cell junction</location>
        <location>Focal adhesion</location>
    </subcellularLocation>
    <subcellularLocation>
        <location>Cell junction</location>
    </subcellularLocation>
    <subcellularLocation>
        <location>Cytoplasm</location>
        <location>Cytoskeleton</location>
    </subcellularLocation>
    <text>Localized at focal adhesion sites, cell-cell junctions and cell-extracellular matrix junctions.</text>
</comment>
<comment type="PTM">
    <text evidence="6">Phosphorylated at Ser-594 by MAPK1/ERK2 during cell spreading.</text>
</comment>
<sequence length="733" mass="82349">MARILGVGRSSASSLNNKEDNESDVALLSPKDPNRVHTKEQLAHPASSNLDPSMQGLPAGLSLDDFIPGHLRTHIGSSSRGTRVPVIRNGGSNTLNFQFHDPAPRTVCNGCPPPRRDGSLNPDPAWYQTWPGPGSRPSMSPKPPASQHAQNWSATWTKDSKRQDKRWVKYEGIGPVDESGMPIAPRSSVDSPRDWYRRMFQQIHRKMPDLQLDWTLEDPPKVVSARASSAEPRHLGTLQRPASRPGTTETSSGRNWNHSEETSRNTFNYNFRPSSSGLHPPNQVPRHREKVENVWTEDSWNQFLHELETGHKPKKPLVDDPVEKPAQPIEVLLERELAKLSAELDKDLRAIETRLPSPKNSQAPRRPLEQPGLEQQPSARLSSAWRPNSPHAPYFSSSRPLSPHRMADGGGSPFLGRRDFVYPSSAREPSASERGSSPSRKEEKKRKAARLKFDFQAQSPKELSLQKGDIVYIHKEVDKNWLEGEHHGRLGIFPANYVEVLPADEIPKPIKPPTYQVLEYGDAVAQYTFKGDLEVELSFRKGERICLIRKVNEHWYEGRITGTGRQGIFPASYVQINREPRLRLCDDGPQLPASPNPTTTAHLSSHSHPSSIPVDPTDWGGRTSPRRSAFPFPITLQEPRSQTQSLNTPGPTLSHPRATSRPINLGPSSPNTEIHWTPYRAMYQYRPQNEDELELREGDRVDVMQQCDDGWFVGVSRRTQKFGTFPGNYVAPV</sequence>
<accession>Q9R1Z8</accession>
<accession>Q62423</accession>
<feature type="chain" id="PRO_0000065831" description="Vinexin">
    <location>
        <begin position="1"/>
        <end position="733"/>
    </location>
</feature>
<feature type="domain" description="SoHo" evidence="4">
    <location>
        <begin position="164"/>
        <end position="232"/>
    </location>
</feature>
<feature type="domain" description="SH3 1" evidence="3">
    <location>
        <begin position="444"/>
        <end position="503"/>
    </location>
</feature>
<feature type="domain" description="SH3 2" evidence="3">
    <location>
        <begin position="518"/>
        <end position="579"/>
    </location>
</feature>
<feature type="domain" description="SH3 3" evidence="3">
    <location>
        <begin position="674"/>
        <end position="733"/>
    </location>
</feature>
<feature type="region of interest" description="Disordered" evidence="5">
    <location>
        <begin position="1"/>
        <end position="51"/>
    </location>
</feature>
<feature type="region of interest" description="Disordered" evidence="5">
    <location>
        <begin position="129"/>
        <end position="165"/>
    </location>
</feature>
<feature type="region of interest" description="Disordered" evidence="5">
    <location>
        <begin position="224"/>
        <end position="285"/>
    </location>
</feature>
<feature type="region of interest" description="Disordered" evidence="5">
    <location>
        <begin position="352"/>
        <end position="448"/>
    </location>
</feature>
<feature type="region of interest" description="Binds to vinculin">
    <location>
        <begin position="444"/>
        <end position="579"/>
    </location>
</feature>
<feature type="region of interest" description="Disordered" evidence="5">
    <location>
        <begin position="584"/>
        <end position="672"/>
    </location>
</feature>
<feature type="region of interest" description="Binds to SOS" evidence="1">
    <location>
        <begin position="674"/>
        <end position="733"/>
    </location>
</feature>
<feature type="compositionally biased region" description="Basic and acidic residues" evidence="5">
    <location>
        <begin position="32"/>
        <end position="42"/>
    </location>
</feature>
<feature type="compositionally biased region" description="Polar residues" evidence="5">
    <location>
        <begin position="147"/>
        <end position="157"/>
    </location>
</feature>
<feature type="compositionally biased region" description="Polar residues" evidence="5">
    <location>
        <begin position="245"/>
        <end position="256"/>
    </location>
</feature>
<feature type="compositionally biased region" description="Polar residues" evidence="5">
    <location>
        <begin position="264"/>
        <end position="277"/>
    </location>
</feature>
<feature type="compositionally biased region" description="Low complexity" evidence="5">
    <location>
        <begin position="597"/>
        <end position="613"/>
    </location>
</feature>
<feature type="compositionally biased region" description="Polar residues" evidence="5">
    <location>
        <begin position="638"/>
        <end position="651"/>
    </location>
</feature>
<feature type="modified residue" description="Phosphoserine" evidence="7 8">
    <location>
        <position position="412"/>
    </location>
</feature>
<feature type="modified residue" description="Phosphoserine" evidence="8">
    <location>
        <position position="459"/>
    </location>
</feature>
<feature type="modified residue" description="Phosphoserine; by MAPK1" evidence="6">
    <location>
        <position position="594"/>
    </location>
</feature>
<feature type="modified residue" description="Phosphoserine" evidence="2">
    <location>
        <position position="607"/>
    </location>
</feature>
<feature type="modified residue" description="Phosphoserine" evidence="2">
    <location>
        <position position="610"/>
    </location>
</feature>
<feature type="modified residue" description="Phosphoserine" evidence="2">
    <location>
        <position position="624"/>
    </location>
</feature>
<reference key="1">
    <citation type="journal article" date="1999" name="J. Cell Biol.">
        <title>Vinexin: a novel vinculin-binding protein with multiple SH3 domains enhances actin cytoskeletal organization.</title>
        <authorList>
            <person name="Kioka N."/>
            <person name="Sakata S."/>
            <person name="Kawauchi T."/>
            <person name="Amachi T."/>
            <person name="Akiyama S.K."/>
            <person name="Okazaki K."/>
            <person name="Yaen C."/>
            <person name="Yamada K.M."/>
            <person name="Aota S."/>
        </authorList>
    </citation>
    <scope>NUCLEOTIDE SEQUENCE [MRNA]</scope>
    <source>
        <tissue>Embryo</tissue>
    </source>
</reference>
<reference key="2">
    <citation type="journal article" date="1996" name="Nat. Biotechnol.">
        <title>Cloning of ligand targets: systematic isolation of SH3 domain-containing proteins.</title>
        <authorList>
            <person name="Sparks A.B."/>
            <person name="Hoffman N.G."/>
            <person name="McConnell S.J."/>
            <person name="Fowlkes D.M."/>
            <person name="Kay B.K."/>
        </authorList>
    </citation>
    <scope>NUCLEOTIDE SEQUENCE [MRNA] OF 559-733</scope>
    <source>
        <tissue>Embryo</tissue>
    </source>
</reference>
<reference key="3">
    <citation type="journal article" date="2003" name="J. Biol. Chem.">
        <title>Interaction of lp-dlg/KIAA0583, a membrane-associated guanylate kinase family protein, with vinexin and beta-catenin at sites of cell-cell contact.</title>
        <authorList>
            <person name="Wakabayashi M."/>
            <person name="Ito T."/>
            <person name="Mitsushima M."/>
            <person name="Aizawa S."/>
            <person name="Ueda K."/>
            <person name="Amachi T."/>
            <person name="Kioka N."/>
        </authorList>
    </citation>
    <scope>SUBCELLULAR LOCATION</scope>
    <scope>INTERACTION WITH DLG5</scope>
</reference>
<reference key="4">
    <citation type="journal article" date="2004" name="J. Biol. Chem.">
        <title>Extracellular signal-regulated kinase activated by epidermal growth factor and cell adhesion interacts with and phosphorylates vinexin.</title>
        <authorList>
            <person name="Mitsushima M."/>
            <person name="Suwa A."/>
            <person name="Amachi T."/>
            <person name="Ueda K."/>
            <person name="Kioka N."/>
        </authorList>
    </citation>
    <scope>PHOSPHORYLATION AT SER-594</scope>
    <scope>INTERACTION WITH MAPK1/ERK2</scope>
    <scope>SUBCELLULAR LOCATION</scope>
</reference>
<reference key="5">
    <citation type="journal article" date="2004" name="Exp. Cell Res.">
        <title>The suppressor of cytokine signaling (SOCS)-7 interacts with the actin cytoskeleton through vinexin.</title>
        <authorList>
            <person name="Martens N."/>
            <person name="Wery M."/>
            <person name="Wang P."/>
            <person name="Braet F."/>
            <person name="Gertler A."/>
            <person name="Hooghe R."/>
            <person name="Vandenhaute J."/>
            <person name="Hooghe-Peters E.L."/>
        </authorList>
    </citation>
    <scope>INTERACTION WITH SOCS7</scope>
</reference>
<reference key="6">
    <citation type="journal article" date="2007" name="Proc. Natl. Acad. Sci. U.S.A.">
        <title>Large-scale phosphorylation analysis of mouse liver.</title>
        <authorList>
            <person name="Villen J."/>
            <person name="Beausoleil S.A."/>
            <person name="Gerber S.A."/>
            <person name="Gygi S.P."/>
        </authorList>
    </citation>
    <scope>PHOSPHORYLATION [LARGE SCALE ANALYSIS] AT SER-412</scope>
    <scope>IDENTIFICATION BY MASS SPECTROMETRY [LARGE SCALE ANALYSIS]</scope>
    <source>
        <tissue>Liver</tissue>
    </source>
</reference>
<reference key="7">
    <citation type="journal article" date="2010" name="Cell">
        <title>A tissue-specific atlas of mouse protein phosphorylation and expression.</title>
        <authorList>
            <person name="Huttlin E.L."/>
            <person name="Jedrychowski M.P."/>
            <person name="Elias J.E."/>
            <person name="Goswami T."/>
            <person name="Rad R."/>
            <person name="Beausoleil S.A."/>
            <person name="Villen J."/>
            <person name="Haas W."/>
            <person name="Sowa M.E."/>
            <person name="Gygi S.P."/>
        </authorList>
    </citation>
    <scope>PHOSPHORYLATION [LARGE SCALE ANALYSIS] AT SER-412 AND SER-459</scope>
    <scope>IDENTIFICATION BY MASS SPECTROMETRY [LARGE SCALE ANALYSIS]</scope>
    <source>
        <tissue>Brown adipose tissue</tissue>
        <tissue>Heart</tissue>
        <tissue>Kidney</tissue>
        <tissue>Lung</tissue>
    </source>
</reference>
<organism>
    <name type="scientific">Mus musculus</name>
    <name type="common">Mouse</name>
    <dbReference type="NCBI Taxonomy" id="10090"/>
    <lineage>
        <taxon>Eukaryota</taxon>
        <taxon>Metazoa</taxon>
        <taxon>Chordata</taxon>
        <taxon>Craniata</taxon>
        <taxon>Vertebrata</taxon>
        <taxon>Euteleostomi</taxon>
        <taxon>Mammalia</taxon>
        <taxon>Eutheria</taxon>
        <taxon>Euarchontoglires</taxon>
        <taxon>Glires</taxon>
        <taxon>Rodentia</taxon>
        <taxon>Myomorpha</taxon>
        <taxon>Muroidea</taxon>
        <taxon>Muridae</taxon>
        <taxon>Murinae</taxon>
        <taxon>Mus</taxon>
        <taxon>Mus</taxon>
    </lineage>
</organism>
<name>VINEX_MOUSE</name>
<dbReference type="EMBL" id="AF064806">
    <property type="protein sequence ID" value="AAD32303.1"/>
    <property type="molecule type" value="mRNA"/>
</dbReference>
<dbReference type="EMBL" id="U58889">
    <property type="protein sequence ID" value="AAC52642.1"/>
    <property type="molecule type" value="mRNA"/>
</dbReference>
<dbReference type="CCDS" id="CCDS27249.1"/>
<dbReference type="RefSeq" id="NP_035496.1">
    <property type="nucleotide sequence ID" value="NM_011366.4"/>
</dbReference>
<dbReference type="SMR" id="Q9R1Z8"/>
<dbReference type="BioGRID" id="203212">
    <property type="interactions" value="19"/>
</dbReference>
<dbReference type="ELM" id="Q9R1Z8"/>
<dbReference type="FunCoup" id="Q9R1Z8">
    <property type="interactions" value="501"/>
</dbReference>
<dbReference type="IntAct" id="Q9R1Z8">
    <property type="interactions" value="4"/>
</dbReference>
<dbReference type="MINT" id="Q9R1Z8"/>
<dbReference type="STRING" id="10090.ENSMUSP00000022682"/>
<dbReference type="GlyGen" id="Q9R1Z8">
    <property type="glycosylation" value="4 sites, 1 N-linked glycan (1 site), 1 O-linked glycan (1 site)"/>
</dbReference>
<dbReference type="iPTMnet" id="Q9R1Z8"/>
<dbReference type="PhosphoSitePlus" id="Q9R1Z8"/>
<dbReference type="SwissPalm" id="Q9R1Z8"/>
<dbReference type="jPOST" id="Q9R1Z8"/>
<dbReference type="PaxDb" id="10090-ENSMUSP00000022682"/>
<dbReference type="ProteomicsDB" id="299952"/>
<dbReference type="Pumba" id="Q9R1Z8"/>
<dbReference type="Antibodypedia" id="2849">
    <property type="antibodies" value="77 antibodies from 17 providers"/>
</dbReference>
<dbReference type="DNASU" id="20410"/>
<dbReference type="Ensembl" id="ENSMUST00000022682.6">
    <property type="protein sequence ID" value="ENSMUSP00000022682.6"/>
    <property type="gene ID" value="ENSMUSG00000022091.7"/>
</dbReference>
<dbReference type="GeneID" id="20410"/>
<dbReference type="KEGG" id="mmu:20410"/>
<dbReference type="UCSC" id="uc007unk.1">
    <property type="organism name" value="mouse"/>
</dbReference>
<dbReference type="AGR" id="MGI:700013"/>
<dbReference type="CTD" id="10174"/>
<dbReference type="MGI" id="MGI:700013">
    <property type="gene designation" value="Sorbs3"/>
</dbReference>
<dbReference type="VEuPathDB" id="HostDB:ENSMUSG00000022091"/>
<dbReference type="eggNOG" id="KOG4225">
    <property type="taxonomic scope" value="Eukaryota"/>
</dbReference>
<dbReference type="GeneTree" id="ENSGT00940000160558"/>
<dbReference type="HOGENOM" id="CLU_026296_0_0_1"/>
<dbReference type="InParanoid" id="Q9R1Z8"/>
<dbReference type="OMA" id="TVCNGYL"/>
<dbReference type="OrthoDB" id="73680at2759"/>
<dbReference type="PhylomeDB" id="Q9R1Z8"/>
<dbReference type="TreeFam" id="TF320680"/>
<dbReference type="Reactome" id="R-MMU-445355">
    <property type="pathway name" value="Smooth Muscle Contraction"/>
</dbReference>
<dbReference type="BioGRID-ORCS" id="20410">
    <property type="hits" value="1 hit in 77 CRISPR screens"/>
</dbReference>
<dbReference type="ChiTaRS" id="Sorbs3">
    <property type="organism name" value="mouse"/>
</dbReference>
<dbReference type="PRO" id="PR:Q9R1Z8"/>
<dbReference type="Proteomes" id="UP000000589">
    <property type="component" value="Chromosome 14"/>
</dbReference>
<dbReference type="RNAct" id="Q9R1Z8">
    <property type="molecule type" value="protein"/>
</dbReference>
<dbReference type="Bgee" id="ENSMUSG00000022091">
    <property type="expression patterns" value="Expressed in external carotid artery and 159 other cell types or tissues"/>
</dbReference>
<dbReference type="ExpressionAtlas" id="Q9R1Z8">
    <property type="expression patterns" value="baseline and differential"/>
</dbReference>
<dbReference type="GO" id="GO:0005737">
    <property type="term" value="C:cytoplasm"/>
    <property type="evidence" value="ECO:0000314"/>
    <property type="project" value="MGI"/>
</dbReference>
<dbReference type="GO" id="GO:0005856">
    <property type="term" value="C:cytoskeleton"/>
    <property type="evidence" value="ECO:0007669"/>
    <property type="project" value="UniProtKB-SubCell"/>
</dbReference>
<dbReference type="GO" id="GO:0005925">
    <property type="term" value="C:focal adhesion"/>
    <property type="evidence" value="ECO:0000314"/>
    <property type="project" value="MGI"/>
</dbReference>
<dbReference type="GO" id="GO:0005634">
    <property type="term" value="C:nucleus"/>
    <property type="evidence" value="ECO:0000314"/>
    <property type="project" value="MGI"/>
</dbReference>
<dbReference type="GO" id="GO:0017166">
    <property type="term" value="F:vinculin binding"/>
    <property type="evidence" value="ECO:0007669"/>
    <property type="project" value="Ensembl"/>
</dbReference>
<dbReference type="GO" id="GO:0031589">
    <property type="term" value="P:cell-substrate adhesion"/>
    <property type="evidence" value="ECO:0000314"/>
    <property type="project" value="MGI"/>
</dbReference>
<dbReference type="GO" id="GO:0000165">
    <property type="term" value="P:MAPK cascade"/>
    <property type="evidence" value="ECO:0000315"/>
    <property type="project" value="MGI"/>
</dbReference>
<dbReference type="GO" id="GO:0000122">
    <property type="term" value="P:negative regulation of transcription by RNA polymerase II"/>
    <property type="evidence" value="ECO:0000315"/>
    <property type="project" value="MGI"/>
</dbReference>
<dbReference type="GO" id="GO:0043410">
    <property type="term" value="P:positive regulation of MAPK cascade"/>
    <property type="evidence" value="ECO:0000315"/>
    <property type="project" value="MGI"/>
</dbReference>
<dbReference type="GO" id="GO:0051496">
    <property type="term" value="P:positive regulation of stress fiber assembly"/>
    <property type="evidence" value="ECO:0007669"/>
    <property type="project" value="Ensembl"/>
</dbReference>
<dbReference type="CDD" id="cd11921">
    <property type="entry name" value="SH3_Vinexin_1"/>
    <property type="match status" value="1"/>
</dbReference>
<dbReference type="CDD" id="cd11924">
    <property type="entry name" value="SH3_Vinexin_2"/>
    <property type="match status" value="1"/>
</dbReference>
<dbReference type="CDD" id="cd11918">
    <property type="entry name" value="SH3_Vinexin_3"/>
    <property type="match status" value="1"/>
</dbReference>
<dbReference type="FunFam" id="2.30.30.40:FF:000001">
    <property type="entry name" value="Sorbin and SH3 domain-containing protein 1 isoform 2"/>
    <property type="match status" value="1"/>
</dbReference>
<dbReference type="FunFam" id="2.30.30.40:FF:000140">
    <property type="entry name" value="vinexin isoform X2"/>
    <property type="match status" value="1"/>
</dbReference>
<dbReference type="Gene3D" id="2.30.30.40">
    <property type="entry name" value="SH3 Domains"/>
    <property type="match status" value="3"/>
</dbReference>
<dbReference type="InterPro" id="IPR050384">
    <property type="entry name" value="Endophilin_SH3RF"/>
</dbReference>
<dbReference type="InterPro" id="IPR036028">
    <property type="entry name" value="SH3-like_dom_sf"/>
</dbReference>
<dbReference type="InterPro" id="IPR001452">
    <property type="entry name" value="SH3_domain"/>
</dbReference>
<dbReference type="InterPro" id="IPR003127">
    <property type="entry name" value="SoHo_dom"/>
</dbReference>
<dbReference type="InterPro" id="IPR035609">
    <property type="entry name" value="Vinexin_SH3_1"/>
</dbReference>
<dbReference type="InterPro" id="IPR035608">
    <property type="entry name" value="Vinexin_SH3_2"/>
</dbReference>
<dbReference type="InterPro" id="IPR035607">
    <property type="entry name" value="Vinexin_SH3_3"/>
</dbReference>
<dbReference type="PANTHER" id="PTHR14167">
    <property type="entry name" value="SH3 DOMAIN-CONTAINING"/>
    <property type="match status" value="1"/>
</dbReference>
<dbReference type="PANTHER" id="PTHR14167:SF54">
    <property type="entry name" value="VINEXIN"/>
    <property type="match status" value="1"/>
</dbReference>
<dbReference type="Pfam" id="PF00018">
    <property type="entry name" value="SH3_1"/>
    <property type="match status" value="1"/>
</dbReference>
<dbReference type="Pfam" id="PF14604">
    <property type="entry name" value="SH3_9"/>
    <property type="match status" value="2"/>
</dbReference>
<dbReference type="Pfam" id="PF02208">
    <property type="entry name" value="Sorb"/>
    <property type="match status" value="1"/>
</dbReference>
<dbReference type="PRINTS" id="PR00499">
    <property type="entry name" value="P67PHOX"/>
</dbReference>
<dbReference type="PRINTS" id="PR00452">
    <property type="entry name" value="SH3DOMAIN"/>
</dbReference>
<dbReference type="SMART" id="SM00326">
    <property type="entry name" value="SH3"/>
    <property type="match status" value="3"/>
</dbReference>
<dbReference type="SMART" id="SM00459">
    <property type="entry name" value="Sorb"/>
    <property type="match status" value="1"/>
</dbReference>
<dbReference type="SUPFAM" id="SSF50044">
    <property type="entry name" value="SH3-domain"/>
    <property type="match status" value="3"/>
</dbReference>
<dbReference type="PROSITE" id="PS50002">
    <property type="entry name" value="SH3"/>
    <property type="match status" value="3"/>
</dbReference>
<dbReference type="PROSITE" id="PS50831">
    <property type="entry name" value="SOHO"/>
    <property type="match status" value="1"/>
</dbReference>
<gene>
    <name type="primary">Sorbs3</name>
    <name type="synonym">Scam1</name>
    <name type="synonym">Sh3d4</name>
</gene>
<keyword id="KW-0130">Cell adhesion</keyword>
<keyword id="KW-0965">Cell junction</keyword>
<keyword id="KW-0963">Cytoplasm</keyword>
<keyword id="KW-0206">Cytoskeleton</keyword>
<keyword id="KW-0597">Phosphoprotein</keyword>
<keyword id="KW-1185">Reference proteome</keyword>
<keyword id="KW-0677">Repeat</keyword>
<keyword id="KW-0728">SH3 domain</keyword>
<evidence type="ECO:0000250" key="1"/>
<evidence type="ECO:0000250" key="2">
    <source>
        <dbReference type="UniProtKB" id="O60504"/>
    </source>
</evidence>
<evidence type="ECO:0000255" key="3">
    <source>
        <dbReference type="PROSITE-ProRule" id="PRU00192"/>
    </source>
</evidence>
<evidence type="ECO:0000255" key="4">
    <source>
        <dbReference type="PROSITE-ProRule" id="PRU00195"/>
    </source>
</evidence>
<evidence type="ECO:0000256" key="5">
    <source>
        <dbReference type="SAM" id="MobiDB-lite"/>
    </source>
</evidence>
<evidence type="ECO:0000269" key="6">
    <source>
    </source>
</evidence>
<evidence type="ECO:0007744" key="7">
    <source>
    </source>
</evidence>
<evidence type="ECO:0007744" key="8">
    <source>
    </source>
</evidence>